<protein>
    <recommendedName>
        <fullName>Protein TIFY 4A</fullName>
    </recommendedName>
    <alternativeName>
        <fullName>Protein PEAPOD 1</fullName>
    </alternativeName>
</protein>
<organism>
    <name type="scientific">Arabidopsis thaliana</name>
    <name type="common">Mouse-ear cress</name>
    <dbReference type="NCBI Taxonomy" id="3702"/>
    <lineage>
        <taxon>Eukaryota</taxon>
        <taxon>Viridiplantae</taxon>
        <taxon>Streptophyta</taxon>
        <taxon>Embryophyta</taxon>
        <taxon>Tracheophyta</taxon>
        <taxon>Spermatophyta</taxon>
        <taxon>Magnoliopsida</taxon>
        <taxon>eudicotyledons</taxon>
        <taxon>Gunneridae</taxon>
        <taxon>Pentapetalae</taxon>
        <taxon>rosids</taxon>
        <taxon>malvids</taxon>
        <taxon>Brassicales</taxon>
        <taxon>Brassicaceae</taxon>
        <taxon>Camelineae</taxon>
        <taxon>Arabidopsis</taxon>
    </lineage>
</organism>
<name>TIF4A_ARATH</name>
<reference key="1">
    <citation type="journal article" date="1998" name="Nature">
        <title>Analysis of 1.9 Mb of contiguous sequence from chromosome 4 of Arabidopsis thaliana.</title>
        <authorList>
            <person name="Bevan M."/>
            <person name="Bancroft I."/>
            <person name="Bent E."/>
            <person name="Love K."/>
            <person name="Goodman H.M."/>
            <person name="Dean C."/>
            <person name="Bergkamp R."/>
            <person name="Dirkse W."/>
            <person name="van Staveren M."/>
            <person name="Stiekema W."/>
            <person name="Drost L."/>
            <person name="Ridley P."/>
            <person name="Hudson S.-A."/>
            <person name="Patel K."/>
            <person name="Murphy G."/>
            <person name="Piffanelli P."/>
            <person name="Wedler H."/>
            <person name="Wedler E."/>
            <person name="Wambutt R."/>
            <person name="Weitzenegger T."/>
            <person name="Pohl T."/>
            <person name="Terryn N."/>
            <person name="Gielen J."/>
            <person name="Villarroel R."/>
            <person name="De Clercq R."/>
            <person name="van Montagu M."/>
            <person name="Lecharny A."/>
            <person name="Aubourg S."/>
            <person name="Gy I."/>
            <person name="Kreis M."/>
            <person name="Lao N."/>
            <person name="Kavanagh T."/>
            <person name="Hempel S."/>
            <person name="Kotter P."/>
            <person name="Entian K.-D."/>
            <person name="Rieger M."/>
            <person name="Schaefer M."/>
            <person name="Funk B."/>
            <person name="Mueller-Auer S."/>
            <person name="Silvey M."/>
            <person name="James R."/>
            <person name="Monfort A."/>
            <person name="Pons A."/>
            <person name="Puigdomenech P."/>
            <person name="Douka A."/>
            <person name="Voukelatou E."/>
            <person name="Milioni D."/>
            <person name="Hatzopoulos P."/>
            <person name="Piravandi E."/>
            <person name="Obermaier B."/>
            <person name="Hilbert H."/>
            <person name="Duesterhoeft A."/>
            <person name="Moores T."/>
            <person name="Jones J.D.G."/>
            <person name="Eneva T."/>
            <person name="Palme K."/>
            <person name="Benes V."/>
            <person name="Rechmann S."/>
            <person name="Ansorge W."/>
            <person name="Cooke R."/>
            <person name="Berger C."/>
            <person name="Delseny M."/>
            <person name="Voet M."/>
            <person name="Volckaert G."/>
            <person name="Mewes H.-W."/>
            <person name="Klosterman S."/>
            <person name="Schueller C."/>
            <person name="Chalwatzis N."/>
        </authorList>
    </citation>
    <scope>NUCLEOTIDE SEQUENCE [LARGE SCALE GENOMIC DNA]</scope>
    <source>
        <strain>cv. Columbia</strain>
    </source>
</reference>
<reference key="2">
    <citation type="journal article" date="1999" name="Nature">
        <title>Sequence and analysis of chromosome 4 of the plant Arabidopsis thaliana.</title>
        <authorList>
            <person name="Mayer K.F.X."/>
            <person name="Schueller C."/>
            <person name="Wambutt R."/>
            <person name="Murphy G."/>
            <person name="Volckaert G."/>
            <person name="Pohl T."/>
            <person name="Duesterhoeft A."/>
            <person name="Stiekema W."/>
            <person name="Entian K.-D."/>
            <person name="Terryn N."/>
            <person name="Harris B."/>
            <person name="Ansorge W."/>
            <person name="Brandt P."/>
            <person name="Grivell L.A."/>
            <person name="Rieger M."/>
            <person name="Weichselgartner M."/>
            <person name="de Simone V."/>
            <person name="Obermaier B."/>
            <person name="Mache R."/>
            <person name="Mueller M."/>
            <person name="Kreis M."/>
            <person name="Delseny M."/>
            <person name="Puigdomenech P."/>
            <person name="Watson M."/>
            <person name="Schmidtheini T."/>
            <person name="Reichert B."/>
            <person name="Portetelle D."/>
            <person name="Perez-Alonso M."/>
            <person name="Boutry M."/>
            <person name="Bancroft I."/>
            <person name="Vos P."/>
            <person name="Hoheisel J."/>
            <person name="Zimmermann W."/>
            <person name="Wedler H."/>
            <person name="Ridley P."/>
            <person name="Langham S.-A."/>
            <person name="McCullagh B."/>
            <person name="Bilham L."/>
            <person name="Robben J."/>
            <person name="van der Schueren J."/>
            <person name="Grymonprez B."/>
            <person name="Chuang Y.-J."/>
            <person name="Vandenbussche F."/>
            <person name="Braeken M."/>
            <person name="Weltjens I."/>
            <person name="Voet M."/>
            <person name="Bastiaens I."/>
            <person name="Aert R."/>
            <person name="Defoor E."/>
            <person name="Weitzenegger T."/>
            <person name="Bothe G."/>
            <person name="Ramsperger U."/>
            <person name="Hilbert H."/>
            <person name="Braun M."/>
            <person name="Holzer E."/>
            <person name="Brandt A."/>
            <person name="Peters S."/>
            <person name="van Staveren M."/>
            <person name="Dirkse W."/>
            <person name="Mooijman P."/>
            <person name="Klein Lankhorst R."/>
            <person name="Rose M."/>
            <person name="Hauf J."/>
            <person name="Koetter P."/>
            <person name="Berneiser S."/>
            <person name="Hempel S."/>
            <person name="Feldpausch M."/>
            <person name="Lamberth S."/>
            <person name="Van den Daele H."/>
            <person name="De Keyser A."/>
            <person name="Buysshaert C."/>
            <person name="Gielen J."/>
            <person name="Villarroel R."/>
            <person name="De Clercq R."/>
            <person name="van Montagu M."/>
            <person name="Rogers J."/>
            <person name="Cronin A."/>
            <person name="Quail M.A."/>
            <person name="Bray-Allen S."/>
            <person name="Clark L."/>
            <person name="Doggett J."/>
            <person name="Hall S."/>
            <person name="Kay M."/>
            <person name="Lennard N."/>
            <person name="McLay K."/>
            <person name="Mayes R."/>
            <person name="Pettett A."/>
            <person name="Rajandream M.A."/>
            <person name="Lyne M."/>
            <person name="Benes V."/>
            <person name="Rechmann S."/>
            <person name="Borkova D."/>
            <person name="Bloecker H."/>
            <person name="Scharfe M."/>
            <person name="Grimm M."/>
            <person name="Loehnert T.-H."/>
            <person name="Dose S."/>
            <person name="de Haan M."/>
            <person name="Maarse A.C."/>
            <person name="Schaefer M."/>
            <person name="Mueller-Auer S."/>
            <person name="Gabel C."/>
            <person name="Fuchs M."/>
            <person name="Fartmann B."/>
            <person name="Granderath K."/>
            <person name="Dauner D."/>
            <person name="Herzl A."/>
            <person name="Neumann S."/>
            <person name="Argiriou A."/>
            <person name="Vitale D."/>
            <person name="Liguori R."/>
            <person name="Piravandi E."/>
            <person name="Massenet O."/>
            <person name="Quigley F."/>
            <person name="Clabauld G."/>
            <person name="Muendlein A."/>
            <person name="Felber R."/>
            <person name="Schnabl S."/>
            <person name="Hiller R."/>
            <person name="Schmidt W."/>
            <person name="Lecharny A."/>
            <person name="Aubourg S."/>
            <person name="Chefdor F."/>
            <person name="Cooke R."/>
            <person name="Berger C."/>
            <person name="Monfort A."/>
            <person name="Casacuberta E."/>
            <person name="Gibbons T."/>
            <person name="Weber N."/>
            <person name="Vandenbol M."/>
            <person name="Bargues M."/>
            <person name="Terol J."/>
            <person name="Torres A."/>
            <person name="Perez-Perez A."/>
            <person name="Purnelle B."/>
            <person name="Bent E."/>
            <person name="Johnson S."/>
            <person name="Tacon D."/>
            <person name="Jesse T."/>
            <person name="Heijnen L."/>
            <person name="Schwarz S."/>
            <person name="Scholler P."/>
            <person name="Heber S."/>
            <person name="Francs P."/>
            <person name="Bielke C."/>
            <person name="Frishman D."/>
            <person name="Haase D."/>
            <person name="Lemcke K."/>
            <person name="Mewes H.-W."/>
            <person name="Stocker S."/>
            <person name="Zaccaria P."/>
            <person name="Bevan M."/>
            <person name="Wilson R.K."/>
            <person name="de la Bastide M."/>
            <person name="Habermann K."/>
            <person name="Parnell L."/>
            <person name="Dedhia N."/>
            <person name="Gnoj L."/>
            <person name="Schutz K."/>
            <person name="Huang E."/>
            <person name="Spiegel L."/>
            <person name="Sekhon M."/>
            <person name="Murray J."/>
            <person name="Sheet P."/>
            <person name="Cordes M."/>
            <person name="Abu-Threideh J."/>
            <person name="Stoneking T."/>
            <person name="Kalicki J."/>
            <person name="Graves T."/>
            <person name="Harmon G."/>
            <person name="Edwards J."/>
            <person name="Latreille P."/>
            <person name="Courtney L."/>
            <person name="Cloud J."/>
            <person name="Abbott A."/>
            <person name="Scott K."/>
            <person name="Johnson D."/>
            <person name="Minx P."/>
            <person name="Bentley D."/>
            <person name="Fulton B."/>
            <person name="Miller N."/>
            <person name="Greco T."/>
            <person name="Kemp K."/>
            <person name="Kramer J."/>
            <person name="Fulton L."/>
            <person name="Mardis E."/>
            <person name="Dante M."/>
            <person name="Pepin K."/>
            <person name="Hillier L.W."/>
            <person name="Nelson J."/>
            <person name="Spieth J."/>
            <person name="Ryan E."/>
            <person name="Andrews S."/>
            <person name="Geisel C."/>
            <person name="Layman D."/>
            <person name="Du H."/>
            <person name="Ali J."/>
            <person name="Berghoff A."/>
            <person name="Jones K."/>
            <person name="Drone K."/>
            <person name="Cotton M."/>
            <person name="Joshu C."/>
            <person name="Antonoiu B."/>
            <person name="Zidanic M."/>
            <person name="Strong C."/>
            <person name="Sun H."/>
            <person name="Lamar B."/>
            <person name="Yordan C."/>
            <person name="Ma P."/>
            <person name="Zhong J."/>
            <person name="Preston R."/>
            <person name="Vil D."/>
            <person name="Shekher M."/>
            <person name="Matero A."/>
            <person name="Shah R."/>
            <person name="Swaby I.K."/>
            <person name="O'Shaughnessy A."/>
            <person name="Rodriguez M."/>
            <person name="Hoffman J."/>
            <person name="Till S."/>
            <person name="Granat S."/>
            <person name="Shohdy N."/>
            <person name="Hasegawa A."/>
            <person name="Hameed A."/>
            <person name="Lodhi M."/>
            <person name="Johnson A."/>
            <person name="Chen E."/>
            <person name="Marra M.A."/>
            <person name="Martienssen R."/>
            <person name="McCombie W.R."/>
        </authorList>
    </citation>
    <scope>NUCLEOTIDE SEQUENCE [LARGE SCALE GENOMIC DNA]</scope>
    <source>
        <strain>cv. Columbia</strain>
    </source>
</reference>
<reference key="3">
    <citation type="journal article" date="2017" name="Plant J.">
        <title>Araport11: a complete reannotation of the Arabidopsis thaliana reference genome.</title>
        <authorList>
            <person name="Cheng C.Y."/>
            <person name="Krishnakumar V."/>
            <person name="Chan A.P."/>
            <person name="Thibaud-Nissen F."/>
            <person name="Schobel S."/>
            <person name="Town C.D."/>
        </authorList>
    </citation>
    <scope>GENOME REANNOTATION</scope>
    <source>
        <strain>cv. Columbia</strain>
    </source>
</reference>
<reference key="4">
    <citation type="journal article" date="2003" name="Science">
        <title>Empirical analysis of transcriptional activity in the Arabidopsis genome.</title>
        <authorList>
            <person name="Yamada K."/>
            <person name="Lim J."/>
            <person name="Dale J.M."/>
            <person name="Chen H."/>
            <person name="Shinn P."/>
            <person name="Palm C.J."/>
            <person name="Southwick A.M."/>
            <person name="Wu H.C."/>
            <person name="Kim C.J."/>
            <person name="Nguyen M."/>
            <person name="Pham P.K."/>
            <person name="Cheuk R.F."/>
            <person name="Karlin-Newmann G."/>
            <person name="Liu S.X."/>
            <person name="Lam B."/>
            <person name="Sakano H."/>
            <person name="Wu T."/>
            <person name="Yu G."/>
            <person name="Miranda M."/>
            <person name="Quach H.L."/>
            <person name="Tripp M."/>
            <person name="Chang C.H."/>
            <person name="Lee J.M."/>
            <person name="Toriumi M.J."/>
            <person name="Chan M.M."/>
            <person name="Tang C.C."/>
            <person name="Onodera C.S."/>
            <person name="Deng J.M."/>
            <person name="Akiyama K."/>
            <person name="Ansari Y."/>
            <person name="Arakawa T."/>
            <person name="Banh J."/>
            <person name="Banno F."/>
            <person name="Bowser L."/>
            <person name="Brooks S.Y."/>
            <person name="Carninci P."/>
            <person name="Chao Q."/>
            <person name="Choy N."/>
            <person name="Enju A."/>
            <person name="Goldsmith A.D."/>
            <person name="Gurjal M."/>
            <person name="Hansen N.F."/>
            <person name="Hayashizaki Y."/>
            <person name="Johnson-Hopson C."/>
            <person name="Hsuan V.W."/>
            <person name="Iida K."/>
            <person name="Karnes M."/>
            <person name="Khan S."/>
            <person name="Koesema E."/>
            <person name="Ishida J."/>
            <person name="Jiang P.X."/>
            <person name="Jones T."/>
            <person name="Kawai J."/>
            <person name="Kamiya A."/>
            <person name="Meyers C."/>
            <person name="Nakajima M."/>
            <person name="Narusaka M."/>
            <person name="Seki M."/>
            <person name="Sakurai T."/>
            <person name="Satou M."/>
            <person name="Tamse R."/>
            <person name="Vaysberg M."/>
            <person name="Wallender E.K."/>
            <person name="Wong C."/>
            <person name="Yamamura Y."/>
            <person name="Yuan S."/>
            <person name="Shinozaki K."/>
            <person name="Davis R.W."/>
            <person name="Theologis A."/>
            <person name="Ecker J.R."/>
        </authorList>
    </citation>
    <scope>NUCLEOTIDE SEQUENCE [LARGE SCALE MRNA]</scope>
    <source>
        <strain>cv. Columbia</strain>
    </source>
</reference>
<reference key="5">
    <citation type="journal article" date="2006" name="Proc. Natl. Acad. Sci. U.S.A.">
        <title>PEAPOD regulates lamina size and curvature in Arabidopsis.</title>
        <authorList>
            <person name="White D.W.R."/>
        </authorList>
    </citation>
    <scope>FUNCTION</scope>
    <scope>DISRUPTION PHENOTYPE</scope>
    <scope>DEVELOPMENTAL STAGE</scope>
</reference>
<reference key="6">
    <citation type="journal article" date="2010" name="Nature">
        <title>NINJA connects the co-repressor TOPLESS to jasmonate signalling.</title>
        <authorList>
            <person name="Pauwels L."/>
            <person name="Barbero G.F."/>
            <person name="Geerinck J."/>
            <person name="Tilleman S."/>
            <person name="Grunewald W."/>
            <person name="Perez A.C."/>
            <person name="Chico J.M."/>
            <person name="Bossche R.V."/>
            <person name="Sewell J."/>
            <person name="Gil E."/>
            <person name="Garcia-Casado G."/>
            <person name="Witters E."/>
            <person name="Inze D."/>
            <person name="Long J.A."/>
            <person name="De Jaeger G."/>
            <person name="Solano R."/>
            <person name="Goossens A."/>
        </authorList>
    </citation>
    <scope>INTERACTION WITH AFPH2/NINJA</scope>
</reference>
<evidence type="ECO:0000255" key="1"/>
<evidence type="ECO:0000255" key="2">
    <source>
        <dbReference type="PROSITE-ProRule" id="PRU00650"/>
    </source>
</evidence>
<evidence type="ECO:0000255" key="3">
    <source>
        <dbReference type="PROSITE-ProRule" id="PRU00768"/>
    </source>
</evidence>
<evidence type="ECO:0000256" key="4">
    <source>
        <dbReference type="SAM" id="MobiDB-lite"/>
    </source>
</evidence>
<evidence type="ECO:0000269" key="5">
    <source>
    </source>
</evidence>
<evidence type="ECO:0000269" key="6">
    <source>
    </source>
</evidence>
<evidence type="ECO:0000305" key="7"/>
<comment type="function">
    <text evidence="5">Regulates the arrest of dispersed meristematic cells during lamina development.</text>
</comment>
<comment type="subunit">
    <text evidence="6">Interacts with AFPH2/NINJA.</text>
</comment>
<comment type="interaction">
    <interactant intactId="EBI-15199673">
        <id>Q7XA73</id>
    </interactant>
    <interactant intactId="EBI-2309089">
        <id>Q946J8</id>
        <label>LHP1</label>
    </interactant>
    <organismsDiffer>false</organismsDiffer>
    <experiments>5</experiments>
</comment>
<comment type="interaction">
    <interactant intactId="EBI-15199673">
        <id>Q7XA73</id>
    </interactant>
    <interactant intactId="EBI-2125983">
        <id>Q8LCG7</id>
        <label>NFYC2</label>
    </interactant>
    <organismsDiffer>false</organismsDiffer>
    <experiments>3</experiments>
</comment>
<comment type="interaction">
    <interactant intactId="EBI-15199673">
        <id>Q7XA73</id>
    </interactant>
    <interactant intactId="EBI-2466018">
        <id>Q9FMV5</id>
        <label>NFYC4</label>
    </interactant>
    <organismsDiffer>false</organismsDiffer>
    <experiments>3</experiments>
</comment>
<comment type="interaction">
    <interactant intactId="EBI-15199673">
        <id>Q7XA73</id>
    </interactant>
    <interactant intactId="EBI-15192297">
        <id>Q9LQF0</id>
        <label>TCP23</label>
    </interactant>
    <organismsDiffer>false</organismsDiffer>
    <experiments>3</experiments>
</comment>
<comment type="interaction">
    <interactant intactId="EBI-15199673">
        <id>Q7XA73</id>
    </interactant>
    <interactant intactId="EBI-15206004">
        <id>Q8GY55</id>
        <label>TIFY4B</label>
    </interactant>
    <organismsDiffer>false</organismsDiffer>
    <experiments>3</experiments>
</comment>
<comment type="interaction">
    <interactant intactId="EBI-15199673">
        <id>Q7XA73</id>
    </interactant>
    <interactant intactId="EBI-4426557">
        <id>Q84MB2</id>
        <label>TIFY8</label>
    </interactant>
    <organismsDiffer>false</organismsDiffer>
    <experiments>5</experiments>
</comment>
<comment type="subcellular location">
    <subcellularLocation>
        <location evidence="3">Nucleus</location>
    </subcellularLocation>
</comment>
<comment type="alternative products">
    <event type="alternative splicing"/>
    <isoform>
        <id>Q7XA73-1</id>
        <name>1</name>
        <sequence type="displayed"/>
    </isoform>
    <text>A number of isoforms are produced. According to EST sequences.</text>
</comment>
<comment type="developmental stage">
    <text evidence="5">First detected at the tip of developing leaf, followed by a tip-to-base progression of the expression.</text>
</comment>
<comment type="disruption phenotype">
    <text evidence="5">Plants lacking both TIFY4A and TIFY4B have larger leaves and cotyledon laminae, a dome-shaped leaf curvature and shortened siliques.</text>
</comment>
<comment type="miscellaneous">
    <text>Redundant with TIFY 4B/PPD2.</text>
</comment>
<comment type="similarity">
    <text evidence="7">Belongs to the TIFY/JAZ family.</text>
</comment>
<dbReference type="EMBL" id="Z97336">
    <property type="status" value="NOT_ANNOTATED_CDS"/>
    <property type="molecule type" value="Genomic_DNA"/>
</dbReference>
<dbReference type="EMBL" id="AL161539">
    <property type="status" value="NOT_ANNOTATED_CDS"/>
    <property type="molecule type" value="Genomic_DNA"/>
</dbReference>
<dbReference type="EMBL" id="CP002687">
    <property type="protein sequence ID" value="AEE83484.1"/>
    <property type="molecule type" value="Genomic_DNA"/>
</dbReference>
<dbReference type="EMBL" id="BT010167">
    <property type="protein sequence ID" value="AAQ22636.1"/>
    <property type="molecule type" value="mRNA"/>
</dbReference>
<dbReference type="RefSeq" id="NP_567442.2">
    <molecule id="Q7XA73-1"/>
    <property type="nucleotide sequence ID" value="NM_117555.4"/>
</dbReference>
<dbReference type="BioGRID" id="12420">
    <property type="interactions" value="19"/>
</dbReference>
<dbReference type="FunCoup" id="Q7XA73">
    <property type="interactions" value="595"/>
</dbReference>
<dbReference type="IntAct" id="Q7XA73">
    <property type="interactions" value="10"/>
</dbReference>
<dbReference type="STRING" id="3702.Q7XA73"/>
<dbReference type="iPTMnet" id="Q7XA73"/>
<dbReference type="PaxDb" id="3702-AT4G14713.1"/>
<dbReference type="ProteomicsDB" id="246488">
    <molecule id="Q7XA73-1"/>
</dbReference>
<dbReference type="EnsemblPlants" id="AT4G14713.1">
    <molecule id="Q7XA73-1"/>
    <property type="protein sequence ID" value="AT4G14713.1"/>
    <property type="gene ID" value="AT4G14713"/>
</dbReference>
<dbReference type="GeneID" id="827123"/>
<dbReference type="Gramene" id="AT4G14713.1">
    <molecule id="Q7XA73-1"/>
    <property type="protein sequence ID" value="AT4G14713.1"/>
    <property type="gene ID" value="AT4G14713"/>
</dbReference>
<dbReference type="KEGG" id="ath:AT4G14713"/>
<dbReference type="Araport" id="AT4G14713"/>
<dbReference type="TAIR" id="AT4G14713">
    <property type="gene designation" value="PPD1"/>
</dbReference>
<dbReference type="eggNOG" id="ENOG502QWBC">
    <property type="taxonomic scope" value="Eukaryota"/>
</dbReference>
<dbReference type="InParanoid" id="Q7XA73"/>
<dbReference type="PhylomeDB" id="Q7XA73"/>
<dbReference type="PRO" id="PR:Q7XA73"/>
<dbReference type="Proteomes" id="UP000006548">
    <property type="component" value="Chromosome 4"/>
</dbReference>
<dbReference type="ExpressionAtlas" id="Q7XA73">
    <property type="expression patterns" value="baseline and differential"/>
</dbReference>
<dbReference type="GO" id="GO:0005634">
    <property type="term" value="C:nucleus"/>
    <property type="evidence" value="ECO:0000314"/>
    <property type="project" value="TAIR"/>
</dbReference>
<dbReference type="GO" id="GO:0048366">
    <property type="term" value="P:leaf development"/>
    <property type="evidence" value="ECO:0000315"/>
    <property type="project" value="TAIR"/>
</dbReference>
<dbReference type="GO" id="GO:0042127">
    <property type="term" value="P:regulation of cell population proliferation"/>
    <property type="evidence" value="ECO:0000315"/>
    <property type="project" value="TAIR"/>
</dbReference>
<dbReference type="InterPro" id="IPR018467">
    <property type="entry name" value="CCT_CS"/>
</dbReference>
<dbReference type="InterPro" id="IPR040390">
    <property type="entry name" value="TIFY/JAZ"/>
</dbReference>
<dbReference type="InterPro" id="IPR010399">
    <property type="entry name" value="Tify_dom"/>
</dbReference>
<dbReference type="PANTHER" id="PTHR33077:SF42">
    <property type="entry name" value="PROTEIN TIFY 4A-RELATED"/>
    <property type="match status" value="1"/>
</dbReference>
<dbReference type="PANTHER" id="PTHR33077">
    <property type="entry name" value="PROTEIN TIFY 4A-RELATED-RELATED"/>
    <property type="match status" value="1"/>
</dbReference>
<dbReference type="Pfam" id="PF09425">
    <property type="entry name" value="Jas_motif"/>
    <property type="match status" value="1"/>
</dbReference>
<dbReference type="Pfam" id="PF06200">
    <property type="entry name" value="tify"/>
    <property type="match status" value="1"/>
</dbReference>
<dbReference type="SMART" id="SM00979">
    <property type="entry name" value="TIFY"/>
    <property type="match status" value="1"/>
</dbReference>
<dbReference type="PROSITE" id="PS51320">
    <property type="entry name" value="TIFY"/>
    <property type="match status" value="1"/>
</dbReference>
<accession>Q7XA73</accession>
<accession>Q3E6U2</accession>
<proteinExistence type="evidence at protein level"/>
<keyword id="KW-0025">Alternative splicing</keyword>
<keyword id="KW-0217">Developmental protein</keyword>
<keyword id="KW-0539">Nucleus</keyword>
<keyword id="KW-1185">Reference proteome</keyword>
<sequence length="313" mass="34423">MDVGVSPAKSILAKPLKLLTEEDISQLTREDCRKFLKDKGMRRPSWNKSQAIQQVLSLKALYEPGDDSGAGIFRKILVSQPVNPPRVTTTLIEPSNELEACGRVSYPEDNGACHRMDSPRSAEFSGGSGHFVSEKDGHKTTISPRSPAETSELVGQMTIFYSGKVNVYDGIPPEKARSIMHFAANPIDLPENGIFASSRMISKLISKEKMMELPQKGLEKANSSRDSGMEGQANRKVSLQRYREKRKDRKFSKAKKCPGVASSSLEMFLNCQPRMKAAYSQNLGCTGSPLHSQSPESQTKSPNLSVDLNSEGI</sequence>
<feature type="chain" id="PRO_0000300643" description="Protein TIFY 4A">
    <location>
        <begin position="1"/>
        <end position="313"/>
    </location>
</feature>
<feature type="domain" description="Tify" evidence="2">
    <location>
        <begin position="150"/>
        <end position="185"/>
    </location>
</feature>
<feature type="region of interest" description="Disordered" evidence="4">
    <location>
        <begin position="118"/>
        <end position="149"/>
    </location>
</feature>
<feature type="region of interest" description="Disordered" evidence="4">
    <location>
        <begin position="220"/>
        <end position="256"/>
    </location>
</feature>
<feature type="region of interest" description="Disordered" evidence="4">
    <location>
        <begin position="281"/>
        <end position="313"/>
    </location>
</feature>
<feature type="short sequence motif" description="Jas" evidence="1">
    <location>
        <begin position="232"/>
        <end position="254"/>
    </location>
</feature>
<feature type="short sequence motif" description="Nuclear localization signal" evidence="3">
    <location>
        <begin position="234"/>
        <end position="241"/>
    </location>
</feature>
<feature type="compositionally biased region" description="Basic residues" evidence="4">
    <location>
        <begin position="243"/>
        <end position="256"/>
    </location>
</feature>
<gene>
    <name type="primary">TIFY4A</name>
    <name type="synonym">PPD1</name>
    <name type="ordered locus">At4g14713</name>
    <name type="ORF">FCAALL</name>
</gene>